<gene>
    <name type="primary">DEFB129</name>
</gene>
<protein>
    <recommendedName>
        <fullName>Beta-defensin 129</fullName>
    </recommendedName>
    <alternativeName>
        <fullName>Defensin, beta 129</fullName>
    </alternativeName>
</protein>
<feature type="signal peptide" evidence="2">
    <location>
        <begin position="1"/>
        <end position="19"/>
    </location>
</feature>
<feature type="chain" id="PRO_0000289857" description="Beta-defensin 129">
    <location>
        <begin position="20"/>
        <end position="183"/>
    </location>
</feature>
<feature type="region of interest" description="Disordered" evidence="3">
    <location>
        <begin position="141"/>
        <end position="183"/>
    </location>
</feature>
<feature type="compositionally biased region" description="Pro residues" evidence="3">
    <location>
        <begin position="159"/>
        <end position="170"/>
    </location>
</feature>
<feature type="disulfide bond" evidence="1">
    <location>
        <begin position="27"/>
        <end position="53"/>
    </location>
</feature>
<feature type="disulfide bond" evidence="1">
    <location>
        <begin position="34"/>
        <end position="48"/>
    </location>
</feature>
<feature type="disulfide bond" evidence="1">
    <location>
        <begin position="38"/>
        <end position="54"/>
    </location>
</feature>
<reference key="1">
    <citation type="submission" date="2006-11" db="EMBL/GenBank/DDBJ databases">
        <title>Evolution and sequence variation of human beta-defensin genes.</title>
        <authorList>
            <person name="Hollox E.J."/>
            <person name="Armour J.A.L."/>
        </authorList>
    </citation>
    <scope>NUCLEOTIDE SEQUENCE [GENOMIC DNA]</scope>
</reference>
<comment type="function">
    <text evidence="4">Has antibacterial activity.</text>
</comment>
<comment type="subcellular location">
    <subcellularLocation>
        <location evidence="4">Secreted</location>
    </subcellularLocation>
</comment>
<comment type="similarity">
    <text evidence="4">Belongs to the beta-defensin family.</text>
</comment>
<evidence type="ECO:0000250" key="1"/>
<evidence type="ECO:0000255" key="2"/>
<evidence type="ECO:0000256" key="3">
    <source>
        <dbReference type="SAM" id="MobiDB-lite"/>
    </source>
</evidence>
<evidence type="ECO:0000305" key="4"/>
<proteinExistence type="inferred from homology"/>
<dbReference type="EMBL" id="AM410163">
    <property type="protein sequence ID" value="CAL68973.1"/>
    <property type="molecule type" value="Genomic_DNA"/>
</dbReference>
<dbReference type="GO" id="GO:0005576">
    <property type="term" value="C:extracellular region"/>
    <property type="evidence" value="ECO:0007669"/>
    <property type="project" value="UniProtKB-SubCell"/>
</dbReference>
<dbReference type="GO" id="GO:0042742">
    <property type="term" value="P:defense response to bacterium"/>
    <property type="evidence" value="ECO:0007669"/>
    <property type="project" value="UniProtKB-KW"/>
</dbReference>
<name>DB129_PONPY</name>
<sequence>MKLLFPVFASLMLQYQVNTEFIGLRRCLMGFGRCRDHCNVDEKEIQKCKMKKCCVGPKVVKLIKNYLQYGIPNVLNEDVQEMLKPAKNSSAVIQRKHILSVLPQIKSTSFFANTNFVIIPNATPMNSATISTMTPGQITYTATSTKSNTKESRDSATASPPPAPPPPNILPTPSLELEKAEEQ</sequence>
<organism>
    <name type="scientific">Pongo pygmaeus</name>
    <name type="common">Bornean orangutan</name>
    <dbReference type="NCBI Taxonomy" id="9600"/>
    <lineage>
        <taxon>Eukaryota</taxon>
        <taxon>Metazoa</taxon>
        <taxon>Chordata</taxon>
        <taxon>Craniata</taxon>
        <taxon>Vertebrata</taxon>
        <taxon>Euteleostomi</taxon>
        <taxon>Mammalia</taxon>
        <taxon>Eutheria</taxon>
        <taxon>Euarchontoglires</taxon>
        <taxon>Primates</taxon>
        <taxon>Haplorrhini</taxon>
        <taxon>Catarrhini</taxon>
        <taxon>Hominidae</taxon>
        <taxon>Pongo</taxon>
    </lineage>
</organism>
<accession>A4H258</accession>
<keyword id="KW-0044">Antibiotic</keyword>
<keyword id="KW-0929">Antimicrobial</keyword>
<keyword id="KW-0211">Defensin</keyword>
<keyword id="KW-1015">Disulfide bond</keyword>
<keyword id="KW-0964">Secreted</keyword>
<keyword id="KW-0732">Signal</keyword>